<evidence type="ECO:0000255" key="1">
    <source>
        <dbReference type="HAMAP-Rule" id="MF_00019"/>
    </source>
</evidence>
<proteinExistence type="inferred from homology"/>
<accession>Q8ZFT8</accession>
<accession>Q0WGI1</accession>
<dbReference type="EC" id="2.3.1.274" evidence="1"/>
<dbReference type="EMBL" id="AL590842">
    <property type="protein sequence ID" value="CAL20241.1"/>
    <property type="molecule type" value="Genomic_DNA"/>
</dbReference>
<dbReference type="EMBL" id="AE009952">
    <property type="protein sequence ID" value="AAM85322.1"/>
    <property type="molecule type" value="Genomic_DNA"/>
</dbReference>
<dbReference type="EMBL" id="AE017042">
    <property type="protein sequence ID" value="AAS62464.1"/>
    <property type="molecule type" value="Genomic_DNA"/>
</dbReference>
<dbReference type="PIR" id="AG0194">
    <property type="entry name" value="AG0194"/>
</dbReference>
<dbReference type="RefSeq" id="WP_002210932.1">
    <property type="nucleotide sequence ID" value="NZ_WUCM01000105.1"/>
</dbReference>
<dbReference type="RefSeq" id="YP_002346607.1">
    <property type="nucleotide sequence ID" value="NC_003143.1"/>
</dbReference>
<dbReference type="SMR" id="Q8ZFT8"/>
<dbReference type="STRING" id="214092.YPO1596"/>
<dbReference type="PaxDb" id="214092-YPO1596"/>
<dbReference type="EnsemblBacteria" id="AAS62464">
    <property type="protein sequence ID" value="AAS62464"/>
    <property type="gene ID" value="YP_2258"/>
</dbReference>
<dbReference type="GeneID" id="57976975"/>
<dbReference type="KEGG" id="ype:YPO1596"/>
<dbReference type="KEGG" id="ypk:y1755"/>
<dbReference type="KEGG" id="ypm:YP_2258"/>
<dbReference type="PATRIC" id="fig|214092.21.peg.1939"/>
<dbReference type="eggNOG" id="COG0416">
    <property type="taxonomic scope" value="Bacteria"/>
</dbReference>
<dbReference type="HOGENOM" id="CLU_039379_1_0_6"/>
<dbReference type="OMA" id="HGKSNAR"/>
<dbReference type="OrthoDB" id="9806408at2"/>
<dbReference type="UniPathway" id="UPA00085"/>
<dbReference type="Proteomes" id="UP000000815">
    <property type="component" value="Chromosome"/>
</dbReference>
<dbReference type="Proteomes" id="UP000001019">
    <property type="component" value="Chromosome"/>
</dbReference>
<dbReference type="Proteomes" id="UP000002490">
    <property type="component" value="Chromosome"/>
</dbReference>
<dbReference type="GO" id="GO:0005737">
    <property type="term" value="C:cytoplasm"/>
    <property type="evidence" value="ECO:0007669"/>
    <property type="project" value="UniProtKB-SubCell"/>
</dbReference>
<dbReference type="GO" id="GO:0043811">
    <property type="term" value="F:phosphate:acyl-[acyl carrier protein] acyltransferase activity"/>
    <property type="evidence" value="ECO:0007669"/>
    <property type="project" value="UniProtKB-UniRule"/>
</dbReference>
<dbReference type="GO" id="GO:0006633">
    <property type="term" value="P:fatty acid biosynthetic process"/>
    <property type="evidence" value="ECO:0007669"/>
    <property type="project" value="UniProtKB-UniRule"/>
</dbReference>
<dbReference type="GO" id="GO:0008654">
    <property type="term" value="P:phospholipid biosynthetic process"/>
    <property type="evidence" value="ECO:0007669"/>
    <property type="project" value="UniProtKB-KW"/>
</dbReference>
<dbReference type="FunFam" id="3.40.718.10:FF:000008">
    <property type="entry name" value="Phosphate acyltransferase"/>
    <property type="match status" value="1"/>
</dbReference>
<dbReference type="Gene3D" id="3.40.718.10">
    <property type="entry name" value="Isopropylmalate Dehydrogenase"/>
    <property type="match status" value="1"/>
</dbReference>
<dbReference type="HAMAP" id="MF_00019">
    <property type="entry name" value="PlsX"/>
    <property type="match status" value="1"/>
</dbReference>
<dbReference type="InterPro" id="IPR003664">
    <property type="entry name" value="FA_synthesis"/>
</dbReference>
<dbReference type="InterPro" id="IPR012281">
    <property type="entry name" value="Phospholipid_synth_PlsX-like"/>
</dbReference>
<dbReference type="NCBIfam" id="TIGR00182">
    <property type="entry name" value="plsX"/>
    <property type="match status" value="1"/>
</dbReference>
<dbReference type="PANTHER" id="PTHR30100">
    <property type="entry name" value="FATTY ACID/PHOSPHOLIPID SYNTHESIS PROTEIN PLSX"/>
    <property type="match status" value="1"/>
</dbReference>
<dbReference type="PANTHER" id="PTHR30100:SF1">
    <property type="entry name" value="PHOSPHATE ACYLTRANSFERASE"/>
    <property type="match status" value="1"/>
</dbReference>
<dbReference type="Pfam" id="PF02504">
    <property type="entry name" value="FA_synthesis"/>
    <property type="match status" value="1"/>
</dbReference>
<dbReference type="PIRSF" id="PIRSF002465">
    <property type="entry name" value="Phsphlp_syn_PlsX"/>
    <property type="match status" value="1"/>
</dbReference>
<dbReference type="SUPFAM" id="SSF53659">
    <property type="entry name" value="Isocitrate/Isopropylmalate dehydrogenase-like"/>
    <property type="match status" value="1"/>
</dbReference>
<reference key="1">
    <citation type="journal article" date="2001" name="Nature">
        <title>Genome sequence of Yersinia pestis, the causative agent of plague.</title>
        <authorList>
            <person name="Parkhill J."/>
            <person name="Wren B.W."/>
            <person name="Thomson N.R."/>
            <person name="Titball R.W."/>
            <person name="Holden M.T.G."/>
            <person name="Prentice M.B."/>
            <person name="Sebaihia M."/>
            <person name="James K.D."/>
            <person name="Churcher C.M."/>
            <person name="Mungall K.L."/>
            <person name="Baker S."/>
            <person name="Basham D."/>
            <person name="Bentley S.D."/>
            <person name="Brooks K."/>
            <person name="Cerdeno-Tarraga A.-M."/>
            <person name="Chillingworth T."/>
            <person name="Cronin A."/>
            <person name="Davies R.M."/>
            <person name="Davis P."/>
            <person name="Dougan G."/>
            <person name="Feltwell T."/>
            <person name="Hamlin N."/>
            <person name="Holroyd S."/>
            <person name="Jagels K."/>
            <person name="Karlyshev A.V."/>
            <person name="Leather S."/>
            <person name="Moule S."/>
            <person name="Oyston P.C.F."/>
            <person name="Quail M.A."/>
            <person name="Rutherford K.M."/>
            <person name="Simmonds M."/>
            <person name="Skelton J."/>
            <person name="Stevens K."/>
            <person name="Whitehead S."/>
            <person name="Barrell B.G."/>
        </authorList>
    </citation>
    <scope>NUCLEOTIDE SEQUENCE [LARGE SCALE GENOMIC DNA]</scope>
    <source>
        <strain>CO-92 / Biovar Orientalis</strain>
    </source>
</reference>
<reference key="2">
    <citation type="journal article" date="2002" name="J. Bacteriol.">
        <title>Genome sequence of Yersinia pestis KIM.</title>
        <authorList>
            <person name="Deng W."/>
            <person name="Burland V."/>
            <person name="Plunkett G. III"/>
            <person name="Boutin A."/>
            <person name="Mayhew G.F."/>
            <person name="Liss P."/>
            <person name="Perna N.T."/>
            <person name="Rose D.J."/>
            <person name="Mau B."/>
            <person name="Zhou S."/>
            <person name="Schwartz D.C."/>
            <person name="Fetherston J.D."/>
            <person name="Lindler L.E."/>
            <person name="Brubaker R.R."/>
            <person name="Plano G.V."/>
            <person name="Straley S.C."/>
            <person name="McDonough K.A."/>
            <person name="Nilles M.L."/>
            <person name="Matson J.S."/>
            <person name="Blattner F.R."/>
            <person name="Perry R.D."/>
        </authorList>
    </citation>
    <scope>NUCLEOTIDE SEQUENCE [LARGE SCALE GENOMIC DNA]</scope>
    <source>
        <strain>KIM10+ / Biovar Mediaevalis</strain>
    </source>
</reference>
<reference key="3">
    <citation type="journal article" date="2004" name="DNA Res.">
        <title>Complete genome sequence of Yersinia pestis strain 91001, an isolate avirulent to humans.</title>
        <authorList>
            <person name="Song Y."/>
            <person name="Tong Z."/>
            <person name="Wang J."/>
            <person name="Wang L."/>
            <person name="Guo Z."/>
            <person name="Han Y."/>
            <person name="Zhang J."/>
            <person name="Pei D."/>
            <person name="Zhou D."/>
            <person name="Qin H."/>
            <person name="Pang X."/>
            <person name="Han Y."/>
            <person name="Zhai J."/>
            <person name="Li M."/>
            <person name="Cui B."/>
            <person name="Qi Z."/>
            <person name="Jin L."/>
            <person name="Dai R."/>
            <person name="Chen F."/>
            <person name="Li S."/>
            <person name="Ye C."/>
            <person name="Du Z."/>
            <person name="Lin W."/>
            <person name="Wang J."/>
            <person name="Yu J."/>
            <person name="Yang H."/>
            <person name="Wang J."/>
            <person name="Huang P."/>
            <person name="Yang R."/>
        </authorList>
    </citation>
    <scope>NUCLEOTIDE SEQUENCE [LARGE SCALE GENOMIC DNA]</scope>
    <source>
        <strain>91001 / Biovar Mediaevalis</strain>
    </source>
</reference>
<protein>
    <recommendedName>
        <fullName evidence="1">Phosphate acyltransferase</fullName>
        <ecNumber evidence="1">2.3.1.274</ecNumber>
    </recommendedName>
    <alternativeName>
        <fullName evidence="1">Acyl-ACP phosphotransacylase</fullName>
    </alternativeName>
    <alternativeName>
        <fullName evidence="1">Acyl-[acyl-carrier-protein]--phosphate acyltransferase</fullName>
    </alternativeName>
    <alternativeName>
        <fullName evidence="1">Phosphate-acyl-ACP acyltransferase</fullName>
    </alternativeName>
</protein>
<sequence>MACLTLALDAMGGDFGPCVTVPASLQALASNPQLKLLLVGNPDTITPLLANADSLLLERLQVIPAEHVIASDAKPSQAIRASRGTSMRVALELVKNGEAAACVSAGNTGALMGLAKMMIKPLEGIARPALMTVIPNQRRSKTVVLDLGANVECDSTMLVQFAVMGSVMAEEVVGIVEPRVALLNIGEEENKGLDNIREAAAVLKNTPAINYIGYLEGNDLLTGKTDVMVCDGFVGNVTLKTMEGVIRMFLSLLKPSGEGSKQSWWLKLIGRWLQKRVAKRFGHLNPDQYNGACLLGLRGIVIKSHGAANQRAFAVAIEQAVQAVQRQVPERIAARLEAVLPKSD</sequence>
<feature type="chain" id="PRO_0000189969" description="Phosphate acyltransferase">
    <location>
        <begin position="1"/>
        <end position="344"/>
    </location>
</feature>
<name>PLSX_YERPE</name>
<organism>
    <name type="scientific">Yersinia pestis</name>
    <dbReference type="NCBI Taxonomy" id="632"/>
    <lineage>
        <taxon>Bacteria</taxon>
        <taxon>Pseudomonadati</taxon>
        <taxon>Pseudomonadota</taxon>
        <taxon>Gammaproteobacteria</taxon>
        <taxon>Enterobacterales</taxon>
        <taxon>Yersiniaceae</taxon>
        <taxon>Yersinia</taxon>
    </lineage>
</organism>
<keyword id="KW-0963">Cytoplasm</keyword>
<keyword id="KW-0444">Lipid biosynthesis</keyword>
<keyword id="KW-0443">Lipid metabolism</keyword>
<keyword id="KW-0594">Phospholipid biosynthesis</keyword>
<keyword id="KW-1208">Phospholipid metabolism</keyword>
<keyword id="KW-1185">Reference proteome</keyword>
<keyword id="KW-0808">Transferase</keyword>
<gene>
    <name evidence="1" type="primary">plsX</name>
    <name type="ordered locus">YPO1596</name>
    <name type="ordered locus">y1755</name>
    <name type="ordered locus">YP_2258</name>
</gene>
<comment type="function">
    <text evidence="1">Catalyzes the reversible formation of acyl-phosphate (acyl-PO(4)) from acyl-[acyl-carrier-protein] (acyl-ACP). This enzyme utilizes acyl-ACP as fatty acyl donor, but not acyl-CoA.</text>
</comment>
<comment type="catalytic activity">
    <reaction evidence="1">
        <text>a fatty acyl-[ACP] + phosphate = an acyl phosphate + holo-[ACP]</text>
        <dbReference type="Rhea" id="RHEA:42292"/>
        <dbReference type="Rhea" id="RHEA-COMP:9685"/>
        <dbReference type="Rhea" id="RHEA-COMP:14125"/>
        <dbReference type="ChEBI" id="CHEBI:43474"/>
        <dbReference type="ChEBI" id="CHEBI:59918"/>
        <dbReference type="ChEBI" id="CHEBI:64479"/>
        <dbReference type="ChEBI" id="CHEBI:138651"/>
        <dbReference type="EC" id="2.3.1.274"/>
    </reaction>
</comment>
<comment type="pathway">
    <text evidence="1">Lipid metabolism; phospholipid metabolism.</text>
</comment>
<comment type="subunit">
    <text evidence="1">Homodimer. Probably interacts with PlsY.</text>
</comment>
<comment type="subcellular location">
    <subcellularLocation>
        <location evidence="1">Cytoplasm</location>
    </subcellularLocation>
    <text evidence="1">Associated with the membrane possibly through PlsY.</text>
</comment>
<comment type="similarity">
    <text evidence="1">Belongs to the PlsX family.</text>
</comment>